<feature type="signal peptide" evidence="2">
    <location>
        <begin position="1"/>
        <end position="16"/>
    </location>
</feature>
<feature type="chain" id="PRO_0000422821" description="Leucine-rich repeat-containing G-protein coupled receptor 6">
    <location>
        <begin position="17"/>
        <end position="962"/>
    </location>
</feature>
<feature type="transmembrane region" description="Helical" evidence="2">
    <location>
        <begin position="559"/>
        <end position="579"/>
    </location>
</feature>
<feature type="transmembrane region" description="Helical" evidence="2">
    <location>
        <begin position="590"/>
        <end position="610"/>
    </location>
</feature>
<feature type="transmembrane region" description="Helical" evidence="2">
    <location>
        <begin position="647"/>
        <end position="669"/>
    </location>
</feature>
<feature type="transmembrane region" description="Helical" evidence="2">
    <location>
        <begin position="679"/>
        <end position="699"/>
    </location>
</feature>
<feature type="transmembrane region" description="Helical" evidence="2">
    <location>
        <begin position="723"/>
        <end position="743"/>
    </location>
</feature>
<feature type="transmembrane region" description="Helical" evidence="2">
    <location>
        <begin position="766"/>
        <end position="786"/>
    </location>
</feature>
<feature type="transmembrane region" description="Helical" evidence="2">
    <location>
        <begin position="801"/>
        <end position="821"/>
    </location>
</feature>
<feature type="domain" description="LRRNT">
    <location>
        <begin position="20"/>
        <end position="60"/>
    </location>
</feature>
<feature type="repeat" description="LRR 1">
    <location>
        <begin position="38"/>
        <end position="58"/>
    </location>
</feature>
<feature type="repeat" description="LRR 2">
    <location>
        <begin position="59"/>
        <end position="82"/>
    </location>
</feature>
<feature type="repeat" description="LRR 3">
    <location>
        <begin position="83"/>
        <end position="106"/>
    </location>
</feature>
<feature type="repeat" description="LRR 4">
    <location>
        <begin position="107"/>
        <end position="131"/>
    </location>
</feature>
<feature type="repeat" description="LRR 5">
    <location>
        <begin position="133"/>
        <end position="154"/>
    </location>
</feature>
<feature type="repeat" description="LRR 6">
    <location>
        <begin position="155"/>
        <end position="178"/>
    </location>
</feature>
<feature type="repeat" description="LRR 7">
    <location>
        <begin position="179"/>
        <end position="202"/>
    </location>
</feature>
<feature type="repeat" description="LRR 8">
    <location>
        <begin position="203"/>
        <end position="226"/>
    </location>
</feature>
<feature type="repeat" description="LRR 9">
    <location>
        <begin position="228"/>
        <end position="250"/>
    </location>
</feature>
<feature type="repeat" description="LRR 10">
    <location>
        <begin position="251"/>
        <end position="273"/>
    </location>
</feature>
<feature type="repeat" description="LRR 11">
    <location>
        <begin position="275"/>
        <end position="297"/>
    </location>
</feature>
<feature type="repeat" description="LRR 12">
    <location>
        <begin position="298"/>
        <end position="321"/>
    </location>
</feature>
<feature type="repeat" description="LRR 13">
    <location>
        <begin position="322"/>
        <end position="344"/>
    </location>
</feature>
<feature type="repeat" description="LRR 14">
    <location>
        <begin position="345"/>
        <end position="368"/>
    </location>
</feature>
<feature type="repeat" description="LRR 15">
    <location>
        <begin position="370"/>
        <end position="390"/>
    </location>
</feature>
<feature type="repeat" description="LRR 16">
    <location>
        <begin position="391"/>
        <end position="414"/>
    </location>
</feature>
<feature type="repeat" description="LRR 17">
    <location>
        <begin position="416"/>
        <end position="438"/>
    </location>
</feature>
<feature type="glycosylation site" description="N-linked (GlcNAc...) asparagine" evidence="2">
    <location>
        <position position="71"/>
    </location>
</feature>
<feature type="glycosylation site" description="N-linked (GlcNAc...) asparagine" evidence="2">
    <location>
        <position position="202"/>
    </location>
</feature>
<feature type="disulfide bond" evidence="3">
    <location>
        <begin position="633"/>
        <end position="708"/>
    </location>
</feature>
<sequence>MLVVLLILHAVSCAHSHGSPGAAVPVKQCPSACQCEEDGILLLVDCSEQGLSSVPTDLSPLTSYLDLSMNNISEIQPNAFRNLHFLSELRLSGNHLRHIPGPMLQGLYNLKVLMLQNNQLERLPSEDPWELPNLLSLRLDANLIMEVPARTLSGMRSLRHLWLDDNALTEIPVSALNDLSSLQAMTLALNRITLIPDYAFRNLSNLVVLHLHNNMIRTLGQNCFEGLHSLETLELNFNDLQEFPVAIRTLAKLQELGFHNNNIKAIPERAFVGNPLLQTIHFYENPIQFVGRSAFQFLPKLHTLSLNGATEIREFPDLKGTTSLQVLTLTRAGLTSLPYDLCHLLPKLKVLELSHNVIEELPSFYHCTSLQEIGLQHNLIKQIEMNTFQQLGSLRSLDLSWNSINSIHPDAFFSLQSLIKLDLTGNRLSNLPMTGLTSLTHLKLKGNMALSRSFGLEDFPNIRVIEMPYAYQCCVFGGCSSYRSASQWEEQMGSEEEDFQKKSPSLFPIHTDNNYDLDLEEFQLAIEESKLQTSIQCTPIPGPFKPCDNLFDSWVVRLGMWLISLVSLMGNSLLILTVFTSPSYLSPVKFIIGTISGANLLTGLCTGTLALVDARTFGEFALHGAQWEMGAGCRAVGFLSVLASEGSILFLTLAAVQCSVSVSCARAYGKSPSLGSVRAAAVACLALSLAVAALPLIGVGEYGATPLCMPSPLPDGEPSTLGFMVALIMMNSLCFLVITGTYIKLYWDLMKGDFDSIWDCAMIKHVAWLIFTNCLLYCPVAFLTFSSLLSLFPVSEEVVKSVVLVLLPLPASINPLLYLLFNPHFREDMRLLLSRAHLNHDRNLDSFVSVDTEKSSYDSTQALVSFATEADGVFESLSVPNPETVARFTCPPSVALIPCQMQMKPSTDRENTGENLIRSAPGLIAKEQEHIRSSGVDTQNGTSIFSGAYHSTGPSAHSQVFT</sequence>
<name>LGR6_DANRE</name>
<comment type="function">
    <text evidence="1">Receptor for R-spondins that potentiates the canonical Wnt signaling pathway. Upon binding to R-spondins (rspo1, rspo2, rspo3 or rspo4), associates with phosphorylated lrp6 and frizzled receptors that are activated by extracellular Wnt receptors, triggering the canonical Wnt signaling pathway to increase expression of target genes. In contrast to classical G-protein coupled receptors, does not activate heterotrimeric G-proteins to transduce the signal (By similarity).</text>
</comment>
<comment type="subcellular location">
    <subcellularLocation>
        <location evidence="1">Cell membrane</location>
        <topology evidence="1">Multi-pass membrane protein</topology>
    </subcellularLocation>
</comment>
<comment type="developmental stage">
    <text evidence="4">Expressed in the notochord, Kupffer's vesicle, the most anterior region of diencephalon, otic vesicles, and the anterior and posterior lateral line primordia by 24 hours post-fertilization (hpf). From 48 to 72 hpf, expression is confined to the anterior and posterior neuromasts, otic vesicles, pharyngeal arches, pectoral fin buds, and cranial cartilages such as Meckel's cartilages, ceratohyals and trabeculae.</text>
</comment>
<comment type="similarity">
    <text evidence="3">Belongs to the G-protein coupled receptor 1 family.</text>
</comment>
<reference key="1">
    <citation type="journal article" date="2013" name="Nature">
        <title>The zebrafish reference genome sequence and its relationship to the human genome.</title>
        <authorList>
            <person name="Howe K."/>
            <person name="Clark M.D."/>
            <person name="Torroja C.F."/>
            <person name="Torrance J."/>
            <person name="Berthelot C."/>
            <person name="Muffato M."/>
            <person name="Collins J.E."/>
            <person name="Humphray S."/>
            <person name="McLaren K."/>
            <person name="Matthews L."/>
            <person name="McLaren S."/>
            <person name="Sealy I."/>
            <person name="Caccamo M."/>
            <person name="Churcher C."/>
            <person name="Scott C."/>
            <person name="Barrett J.C."/>
            <person name="Koch R."/>
            <person name="Rauch G.J."/>
            <person name="White S."/>
            <person name="Chow W."/>
            <person name="Kilian B."/>
            <person name="Quintais L.T."/>
            <person name="Guerra-Assuncao J.A."/>
            <person name="Zhou Y."/>
            <person name="Gu Y."/>
            <person name="Yen J."/>
            <person name="Vogel J.H."/>
            <person name="Eyre T."/>
            <person name="Redmond S."/>
            <person name="Banerjee R."/>
            <person name="Chi J."/>
            <person name="Fu B."/>
            <person name="Langley E."/>
            <person name="Maguire S.F."/>
            <person name="Laird G.K."/>
            <person name="Lloyd D."/>
            <person name="Kenyon E."/>
            <person name="Donaldson S."/>
            <person name="Sehra H."/>
            <person name="Almeida-King J."/>
            <person name="Loveland J."/>
            <person name="Trevanion S."/>
            <person name="Jones M."/>
            <person name="Quail M."/>
            <person name="Willey D."/>
            <person name="Hunt A."/>
            <person name="Burton J."/>
            <person name="Sims S."/>
            <person name="McLay K."/>
            <person name="Plumb B."/>
            <person name="Davis J."/>
            <person name="Clee C."/>
            <person name="Oliver K."/>
            <person name="Clark R."/>
            <person name="Riddle C."/>
            <person name="Elliot D."/>
            <person name="Threadgold G."/>
            <person name="Harden G."/>
            <person name="Ware D."/>
            <person name="Begum S."/>
            <person name="Mortimore B."/>
            <person name="Kerry G."/>
            <person name="Heath P."/>
            <person name="Phillimore B."/>
            <person name="Tracey A."/>
            <person name="Corby N."/>
            <person name="Dunn M."/>
            <person name="Johnson C."/>
            <person name="Wood J."/>
            <person name="Clark S."/>
            <person name="Pelan S."/>
            <person name="Griffiths G."/>
            <person name="Smith M."/>
            <person name="Glithero R."/>
            <person name="Howden P."/>
            <person name="Barker N."/>
            <person name="Lloyd C."/>
            <person name="Stevens C."/>
            <person name="Harley J."/>
            <person name="Holt K."/>
            <person name="Panagiotidis G."/>
            <person name="Lovell J."/>
            <person name="Beasley H."/>
            <person name="Henderson C."/>
            <person name="Gordon D."/>
            <person name="Auger K."/>
            <person name="Wright D."/>
            <person name="Collins J."/>
            <person name="Raisen C."/>
            <person name="Dyer L."/>
            <person name="Leung K."/>
            <person name="Robertson L."/>
            <person name="Ambridge K."/>
            <person name="Leongamornlert D."/>
            <person name="McGuire S."/>
            <person name="Gilderthorp R."/>
            <person name="Griffiths C."/>
            <person name="Manthravadi D."/>
            <person name="Nichol S."/>
            <person name="Barker G."/>
            <person name="Whitehead S."/>
            <person name="Kay M."/>
            <person name="Brown J."/>
            <person name="Murnane C."/>
            <person name="Gray E."/>
            <person name="Humphries M."/>
            <person name="Sycamore N."/>
            <person name="Barker D."/>
            <person name="Saunders D."/>
            <person name="Wallis J."/>
            <person name="Babbage A."/>
            <person name="Hammond S."/>
            <person name="Mashreghi-Mohammadi M."/>
            <person name="Barr L."/>
            <person name="Martin S."/>
            <person name="Wray P."/>
            <person name="Ellington A."/>
            <person name="Matthews N."/>
            <person name="Ellwood M."/>
            <person name="Woodmansey R."/>
            <person name="Clark G."/>
            <person name="Cooper J."/>
            <person name="Tromans A."/>
            <person name="Grafham D."/>
            <person name="Skuce C."/>
            <person name="Pandian R."/>
            <person name="Andrews R."/>
            <person name="Harrison E."/>
            <person name="Kimberley A."/>
            <person name="Garnett J."/>
            <person name="Fosker N."/>
            <person name="Hall R."/>
            <person name="Garner P."/>
            <person name="Kelly D."/>
            <person name="Bird C."/>
            <person name="Palmer S."/>
            <person name="Gehring I."/>
            <person name="Berger A."/>
            <person name="Dooley C.M."/>
            <person name="Ersan-Urun Z."/>
            <person name="Eser C."/>
            <person name="Geiger H."/>
            <person name="Geisler M."/>
            <person name="Karotki L."/>
            <person name="Kirn A."/>
            <person name="Konantz J."/>
            <person name="Konantz M."/>
            <person name="Oberlander M."/>
            <person name="Rudolph-Geiger S."/>
            <person name="Teucke M."/>
            <person name="Lanz C."/>
            <person name="Raddatz G."/>
            <person name="Osoegawa K."/>
            <person name="Zhu B."/>
            <person name="Rapp A."/>
            <person name="Widaa S."/>
            <person name="Langford C."/>
            <person name="Yang F."/>
            <person name="Schuster S.C."/>
            <person name="Carter N.P."/>
            <person name="Harrow J."/>
            <person name="Ning Z."/>
            <person name="Herrero J."/>
            <person name="Searle S.M."/>
            <person name="Enright A."/>
            <person name="Geisler R."/>
            <person name="Plasterk R.H."/>
            <person name="Lee C."/>
            <person name="Westerfield M."/>
            <person name="de Jong P.J."/>
            <person name="Zon L.I."/>
            <person name="Postlethwait J.H."/>
            <person name="Nusslein-Volhard C."/>
            <person name="Hubbard T.J."/>
            <person name="Roest Crollius H."/>
            <person name="Rogers J."/>
            <person name="Stemple D.L."/>
        </authorList>
    </citation>
    <scope>NUCLEOTIDE SEQUENCE [LARGE SCALE GENOMIC DNA]</scope>
    <source>
        <strain>Tuebingen</strain>
    </source>
</reference>
<reference key="2">
    <citation type="journal article" date="2011" name="Gene Expr. Patterns">
        <title>Expression patterns of lgr4 and lgr6 during zebrafish development.</title>
        <authorList>
            <person name="Hirose K."/>
            <person name="Shimoda N."/>
            <person name="Kikuchi Y."/>
        </authorList>
    </citation>
    <scope>DEVELOPMENTAL STAGE</scope>
</reference>
<keyword id="KW-1003">Cell membrane</keyword>
<keyword id="KW-1015">Disulfide bond</keyword>
<keyword id="KW-0297">G-protein coupled receptor</keyword>
<keyword id="KW-0325">Glycoprotein</keyword>
<keyword id="KW-0433">Leucine-rich repeat</keyword>
<keyword id="KW-0472">Membrane</keyword>
<keyword id="KW-0597">Phosphoprotein</keyword>
<keyword id="KW-0675">Receptor</keyword>
<keyword id="KW-1185">Reference proteome</keyword>
<keyword id="KW-0677">Repeat</keyword>
<keyword id="KW-0732">Signal</keyword>
<keyword id="KW-0807">Transducer</keyword>
<keyword id="KW-0812">Transmembrane</keyword>
<keyword id="KW-1133">Transmembrane helix</keyword>
<dbReference type="EMBL" id="CABZ01030037">
    <property type="status" value="NOT_ANNOTATED_CDS"/>
    <property type="molecule type" value="Genomic_DNA"/>
</dbReference>
<dbReference type="EMBL" id="CABZ01030038">
    <property type="status" value="NOT_ANNOTATED_CDS"/>
    <property type="molecule type" value="Genomic_DNA"/>
</dbReference>
<dbReference type="EMBL" id="CABZ01030039">
    <property type="status" value="NOT_ANNOTATED_CDS"/>
    <property type="molecule type" value="Genomic_DNA"/>
</dbReference>
<dbReference type="EMBL" id="CABZ01030040">
    <property type="status" value="NOT_ANNOTATED_CDS"/>
    <property type="molecule type" value="Genomic_DNA"/>
</dbReference>
<dbReference type="EMBL" id="CABZ01030041">
    <property type="status" value="NOT_ANNOTATED_CDS"/>
    <property type="molecule type" value="Genomic_DNA"/>
</dbReference>
<dbReference type="EMBL" id="CABZ01030042">
    <property type="status" value="NOT_ANNOTATED_CDS"/>
    <property type="molecule type" value="Genomic_DNA"/>
</dbReference>
<dbReference type="EMBL" id="CR936540">
    <property type="status" value="NOT_ANNOTATED_CDS"/>
    <property type="molecule type" value="Genomic_DNA"/>
</dbReference>
<dbReference type="RefSeq" id="NP_001410768.1">
    <property type="nucleotide sequence ID" value="NM_001423839.1"/>
</dbReference>
<dbReference type="SMR" id="P0DM44"/>
<dbReference type="FunCoup" id="P0DM44">
    <property type="interactions" value="1001"/>
</dbReference>
<dbReference type="GlyCosmos" id="P0DM44">
    <property type="glycosylation" value="2 sites, No reported glycans"/>
</dbReference>
<dbReference type="GeneID" id="100330212"/>
<dbReference type="InParanoid" id="P0DM44"/>
<dbReference type="OrthoDB" id="1883493at2759"/>
<dbReference type="Proteomes" id="UP000000437">
    <property type="component" value="Chromosome 23"/>
</dbReference>
<dbReference type="GO" id="GO:0005886">
    <property type="term" value="C:plasma membrane"/>
    <property type="evidence" value="ECO:0000318"/>
    <property type="project" value="GO_Central"/>
</dbReference>
<dbReference type="GO" id="GO:0008528">
    <property type="term" value="F:G protein-coupled peptide receptor activity"/>
    <property type="evidence" value="ECO:0000318"/>
    <property type="project" value="GO_Central"/>
</dbReference>
<dbReference type="GO" id="GO:0016500">
    <property type="term" value="F:protein-hormone receptor activity"/>
    <property type="evidence" value="ECO:0007669"/>
    <property type="project" value="InterPro"/>
</dbReference>
<dbReference type="GO" id="GO:0007189">
    <property type="term" value="P:adenylate cyclase-activating G protein-coupled receptor signaling pathway"/>
    <property type="evidence" value="ECO:0000318"/>
    <property type="project" value="GO_Central"/>
</dbReference>
<dbReference type="GO" id="GO:0009755">
    <property type="term" value="P:hormone-mediated signaling pathway"/>
    <property type="evidence" value="ECO:0000318"/>
    <property type="project" value="GO_Central"/>
</dbReference>
<dbReference type="CDD" id="cd15362">
    <property type="entry name" value="7tmA_LGR6"/>
    <property type="match status" value="1"/>
</dbReference>
<dbReference type="FunFam" id="1.20.1070.10:FF:000028">
    <property type="entry name" value="leucine-rich repeat-containing G-protein coupled receptor 4 isoform X1"/>
    <property type="match status" value="1"/>
</dbReference>
<dbReference type="FunFam" id="3.80.10.10:FF:001438">
    <property type="entry name" value="Uncharacterized protein"/>
    <property type="match status" value="1"/>
</dbReference>
<dbReference type="Gene3D" id="1.20.1070.10">
    <property type="entry name" value="Rhodopsin 7-helix transmembrane proteins"/>
    <property type="match status" value="1"/>
</dbReference>
<dbReference type="Gene3D" id="3.80.10.10">
    <property type="entry name" value="Ribonuclease Inhibitor"/>
    <property type="match status" value="1"/>
</dbReference>
<dbReference type="InterPro" id="IPR000276">
    <property type="entry name" value="GPCR_Rhodpsn"/>
</dbReference>
<dbReference type="InterPro" id="IPR017452">
    <property type="entry name" value="GPCR_Rhodpsn_7TM"/>
</dbReference>
<dbReference type="InterPro" id="IPR002131">
    <property type="entry name" value="Gphrmn_rcpt_fam"/>
</dbReference>
<dbReference type="InterPro" id="IPR001611">
    <property type="entry name" value="Leu-rich_rpt"/>
</dbReference>
<dbReference type="InterPro" id="IPR003591">
    <property type="entry name" value="Leu-rich_rpt_typical-subtyp"/>
</dbReference>
<dbReference type="InterPro" id="IPR032675">
    <property type="entry name" value="LRR_dom_sf"/>
</dbReference>
<dbReference type="InterPro" id="IPR000372">
    <property type="entry name" value="LRRNT"/>
</dbReference>
<dbReference type="PANTHER" id="PTHR24372">
    <property type="entry name" value="GLYCOPROTEIN HORMONE RECEPTOR"/>
    <property type="match status" value="1"/>
</dbReference>
<dbReference type="PANTHER" id="PTHR24372:SF73">
    <property type="entry name" value="LEUCINE RICH REPEAT CONTAINING G PROTEIN-COUPLED RECEPTOR 6"/>
    <property type="match status" value="1"/>
</dbReference>
<dbReference type="Pfam" id="PF00001">
    <property type="entry name" value="7tm_1"/>
    <property type="match status" value="1"/>
</dbReference>
<dbReference type="Pfam" id="PF00560">
    <property type="entry name" value="LRR_1"/>
    <property type="match status" value="1"/>
</dbReference>
<dbReference type="Pfam" id="PF13855">
    <property type="entry name" value="LRR_8"/>
    <property type="match status" value="5"/>
</dbReference>
<dbReference type="PRINTS" id="PR00373">
    <property type="entry name" value="GLYCHORMONER"/>
</dbReference>
<dbReference type="PRINTS" id="PR00237">
    <property type="entry name" value="GPCRRHODOPSN"/>
</dbReference>
<dbReference type="SMART" id="SM00364">
    <property type="entry name" value="LRR_BAC"/>
    <property type="match status" value="6"/>
</dbReference>
<dbReference type="SMART" id="SM00369">
    <property type="entry name" value="LRR_TYP"/>
    <property type="match status" value="14"/>
</dbReference>
<dbReference type="SMART" id="SM00013">
    <property type="entry name" value="LRRNT"/>
    <property type="match status" value="1"/>
</dbReference>
<dbReference type="SUPFAM" id="SSF81321">
    <property type="entry name" value="Family A G protein-coupled receptor-like"/>
    <property type="match status" value="1"/>
</dbReference>
<dbReference type="SUPFAM" id="SSF52058">
    <property type="entry name" value="L domain-like"/>
    <property type="match status" value="2"/>
</dbReference>
<dbReference type="PROSITE" id="PS50262">
    <property type="entry name" value="G_PROTEIN_RECEP_F1_2"/>
    <property type="match status" value="1"/>
</dbReference>
<dbReference type="PROSITE" id="PS51450">
    <property type="entry name" value="LRR"/>
    <property type="match status" value="15"/>
</dbReference>
<evidence type="ECO:0000250" key="1"/>
<evidence type="ECO:0000255" key="2"/>
<evidence type="ECO:0000255" key="3">
    <source>
        <dbReference type="PROSITE-ProRule" id="PRU00521"/>
    </source>
</evidence>
<evidence type="ECO:0000269" key="4">
    <source>
    </source>
</evidence>
<protein>
    <recommendedName>
        <fullName>Leucine-rich repeat-containing G-protein coupled receptor 6</fullName>
    </recommendedName>
</protein>
<organism>
    <name type="scientific">Danio rerio</name>
    <name type="common">Zebrafish</name>
    <name type="synonym">Brachydanio rerio</name>
    <dbReference type="NCBI Taxonomy" id="7955"/>
    <lineage>
        <taxon>Eukaryota</taxon>
        <taxon>Metazoa</taxon>
        <taxon>Chordata</taxon>
        <taxon>Craniata</taxon>
        <taxon>Vertebrata</taxon>
        <taxon>Euteleostomi</taxon>
        <taxon>Actinopterygii</taxon>
        <taxon>Neopterygii</taxon>
        <taxon>Teleostei</taxon>
        <taxon>Ostariophysi</taxon>
        <taxon>Cypriniformes</taxon>
        <taxon>Danionidae</taxon>
        <taxon>Danioninae</taxon>
        <taxon>Danio</taxon>
    </lineage>
</organism>
<gene>
    <name type="primary">lgr6</name>
</gene>
<accession>P0DM44</accession>
<proteinExistence type="evidence at transcript level"/>